<protein>
    <recommendedName>
        <fullName evidence="1">1,4-alpha-glucan branching enzyme GlgB</fullName>
        <ecNumber evidence="1">2.4.1.18</ecNumber>
    </recommendedName>
    <alternativeName>
        <fullName evidence="1">1,4-alpha-D-glucan:1,4-alpha-D-glucan 6-glucosyl-transferase</fullName>
    </alternativeName>
    <alternativeName>
        <fullName evidence="1">Alpha-(1-&gt;4)-glucan branching enzyme</fullName>
    </alternativeName>
    <alternativeName>
        <fullName evidence="1">Glycogen branching enzyme</fullName>
        <shortName evidence="1">BE</shortName>
    </alternativeName>
</protein>
<name>GLGB_PSEU2</name>
<sequence length="741" mass="84062">MNAPDKTGTRRRAIPAAVDLDALIRAEHRDPFSILGPHGDGGSGQYVRAYLPAALSVRLLARDDGRELGEMEMSEVPGFFVGHLEHPQPYLLKINWAGGEQITEDPYSFGPLLGEMDLYLFAEGNHRDLSSCLGAQVTSVDGVDGVRFAVWAPNARRVSVVGSFNSWDGRRHPMRMRHPTGVWEIFVPRLQPGEVYKYEILGAHGILPLKSDPMALSTTLPPDTASKIAAPLQFEWNDQEWLQSRAGRHEVTAPLSIYELHAGSWQMEQVEDNQWRQYNWRELADRLIPYVKELGFTHIELMPIMEHPFGGSWGYQLLAQFAPTARYGSPEDFAFFVDACHRAEIGVILDWVPAHFPTDTHGLAQFDGTCLYEYADPKEGFHQDWNTLIYNLGRTEVHGFMLASALHWLKHYHIDGLRVDAVASMLYRDYSRNAGEWVTNRFGGRENLEAIDFLRHLNDVVALEAPGTMVIAEESTAWPGVSEPTQQGGLGFNYKWNMGWMHDSLQYMEEDPINRGHHHGKLSFSLVYAWSERFVLPISHDEVVHGKHSLIDKMPGDRWQKFANLRAYLSFMWTHPGKKLLFMGCEFGQWREWNHDRELDWYLMQYAEHVGVKNLVGDLNRLYREEKALHERDADPAGFQWLVGDDSANSVFAYLRWSNDGEPLLVVANMTPVPRLDYRLGAPMRGAWTELLNSDAETYAGSNFGNGGEVMTEAEPAHGMEDSLVLNLPPLAVLILKPKKD</sequence>
<accession>Q4ZTJ2</accession>
<feature type="chain" id="PRO_0000260680" description="1,4-alpha-glucan branching enzyme GlgB">
    <location>
        <begin position="1"/>
        <end position="741"/>
    </location>
</feature>
<feature type="active site" description="Nucleophile" evidence="1">
    <location>
        <position position="420"/>
    </location>
</feature>
<feature type="active site" description="Proton donor" evidence="1">
    <location>
        <position position="473"/>
    </location>
</feature>
<dbReference type="EC" id="2.4.1.18" evidence="1"/>
<dbReference type="EMBL" id="CP000075">
    <property type="protein sequence ID" value="AAY37530.1"/>
    <property type="molecule type" value="Genomic_DNA"/>
</dbReference>
<dbReference type="RefSeq" id="WP_011267721.1">
    <property type="nucleotide sequence ID" value="NC_007005.1"/>
</dbReference>
<dbReference type="RefSeq" id="YP_235568.1">
    <property type="nucleotide sequence ID" value="NC_007005.1"/>
</dbReference>
<dbReference type="SMR" id="Q4ZTJ2"/>
<dbReference type="STRING" id="205918.Psyr_2491"/>
<dbReference type="CAZy" id="CBM48">
    <property type="family name" value="Carbohydrate-Binding Module Family 48"/>
</dbReference>
<dbReference type="CAZy" id="GH13">
    <property type="family name" value="Glycoside Hydrolase Family 13"/>
</dbReference>
<dbReference type="KEGG" id="psb:Psyr_2491"/>
<dbReference type="PATRIC" id="fig|205918.7.peg.2551"/>
<dbReference type="eggNOG" id="COG0296">
    <property type="taxonomic scope" value="Bacteria"/>
</dbReference>
<dbReference type="HOGENOM" id="CLU_004245_3_2_6"/>
<dbReference type="OrthoDB" id="9800174at2"/>
<dbReference type="UniPathway" id="UPA00164"/>
<dbReference type="Proteomes" id="UP000000426">
    <property type="component" value="Chromosome"/>
</dbReference>
<dbReference type="GO" id="GO:0005829">
    <property type="term" value="C:cytosol"/>
    <property type="evidence" value="ECO:0007669"/>
    <property type="project" value="TreeGrafter"/>
</dbReference>
<dbReference type="GO" id="GO:0003844">
    <property type="term" value="F:1,4-alpha-glucan branching enzyme activity"/>
    <property type="evidence" value="ECO:0007669"/>
    <property type="project" value="UniProtKB-UniRule"/>
</dbReference>
<dbReference type="GO" id="GO:0043169">
    <property type="term" value="F:cation binding"/>
    <property type="evidence" value="ECO:0007669"/>
    <property type="project" value="InterPro"/>
</dbReference>
<dbReference type="GO" id="GO:0004553">
    <property type="term" value="F:hydrolase activity, hydrolyzing O-glycosyl compounds"/>
    <property type="evidence" value="ECO:0007669"/>
    <property type="project" value="InterPro"/>
</dbReference>
<dbReference type="GO" id="GO:0005978">
    <property type="term" value="P:glycogen biosynthetic process"/>
    <property type="evidence" value="ECO:0007669"/>
    <property type="project" value="UniProtKB-UniRule"/>
</dbReference>
<dbReference type="CDD" id="cd11322">
    <property type="entry name" value="AmyAc_Glg_BE"/>
    <property type="match status" value="1"/>
</dbReference>
<dbReference type="CDD" id="cd02855">
    <property type="entry name" value="E_set_GBE_prok_N"/>
    <property type="match status" value="1"/>
</dbReference>
<dbReference type="FunFam" id="2.60.40.10:FF:000169">
    <property type="entry name" value="1,4-alpha-glucan branching enzyme GlgB"/>
    <property type="match status" value="1"/>
</dbReference>
<dbReference type="FunFam" id="2.60.40.1180:FF:000002">
    <property type="entry name" value="1,4-alpha-glucan branching enzyme GlgB"/>
    <property type="match status" value="1"/>
</dbReference>
<dbReference type="FunFam" id="3.20.20.80:FF:000003">
    <property type="entry name" value="1,4-alpha-glucan branching enzyme GlgB"/>
    <property type="match status" value="1"/>
</dbReference>
<dbReference type="Gene3D" id="3.20.20.80">
    <property type="entry name" value="Glycosidases"/>
    <property type="match status" value="1"/>
</dbReference>
<dbReference type="Gene3D" id="2.60.40.1180">
    <property type="entry name" value="Golgi alpha-mannosidase II"/>
    <property type="match status" value="1"/>
</dbReference>
<dbReference type="Gene3D" id="2.60.40.10">
    <property type="entry name" value="Immunoglobulins"/>
    <property type="match status" value="1"/>
</dbReference>
<dbReference type="HAMAP" id="MF_00685">
    <property type="entry name" value="GlgB"/>
    <property type="match status" value="1"/>
</dbReference>
<dbReference type="InterPro" id="IPR006048">
    <property type="entry name" value="A-amylase/branching_C"/>
</dbReference>
<dbReference type="InterPro" id="IPR037439">
    <property type="entry name" value="Branching_enzy"/>
</dbReference>
<dbReference type="InterPro" id="IPR006407">
    <property type="entry name" value="GlgB"/>
</dbReference>
<dbReference type="InterPro" id="IPR054169">
    <property type="entry name" value="GlgB_N"/>
</dbReference>
<dbReference type="InterPro" id="IPR044143">
    <property type="entry name" value="GlgB_N_E_set_prok"/>
</dbReference>
<dbReference type="InterPro" id="IPR006047">
    <property type="entry name" value="Glyco_hydro_13_cat_dom"/>
</dbReference>
<dbReference type="InterPro" id="IPR004193">
    <property type="entry name" value="Glyco_hydro_13_N"/>
</dbReference>
<dbReference type="InterPro" id="IPR013780">
    <property type="entry name" value="Glyco_hydro_b"/>
</dbReference>
<dbReference type="InterPro" id="IPR017853">
    <property type="entry name" value="Glycoside_hydrolase_SF"/>
</dbReference>
<dbReference type="InterPro" id="IPR013783">
    <property type="entry name" value="Ig-like_fold"/>
</dbReference>
<dbReference type="InterPro" id="IPR014756">
    <property type="entry name" value="Ig_E-set"/>
</dbReference>
<dbReference type="NCBIfam" id="TIGR01515">
    <property type="entry name" value="branching_enzym"/>
    <property type="match status" value="1"/>
</dbReference>
<dbReference type="NCBIfam" id="NF003811">
    <property type="entry name" value="PRK05402.1"/>
    <property type="match status" value="1"/>
</dbReference>
<dbReference type="NCBIfam" id="NF008967">
    <property type="entry name" value="PRK12313.1"/>
    <property type="match status" value="1"/>
</dbReference>
<dbReference type="PANTHER" id="PTHR43651">
    <property type="entry name" value="1,4-ALPHA-GLUCAN-BRANCHING ENZYME"/>
    <property type="match status" value="1"/>
</dbReference>
<dbReference type="PANTHER" id="PTHR43651:SF3">
    <property type="entry name" value="1,4-ALPHA-GLUCAN-BRANCHING ENZYME"/>
    <property type="match status" value="1"/>
</dbReference>
<dbReference type="Pfam" id="PF00128">
    <property type="entry name" value="Alpha-amylase"/>
    <property type="match status" value="1"/>
</dbReference>
<dbReference type="Pfam" id="PF02806">
    <property type="entry name" value="Alpha-amylase_C"/>
    <property type="match status" value="1"/>
</dbReference>
<dbReference type="Pfam" id="PF02922">
    <property type="entry name" value="CBM_48"/>
    <property type="match status" value="1"/>
</dbReference>
<dbReference type="Pfam" id="PF22019">
    <property type="entry name" value="GlgB_N"/>
    <property type="match status" value="1"/>
</dbReference>
<dbReference type="PIRSF" id="PIRSF000463">
    <property type="entry name" value="GlgB"/>
    <property type="match status" value="1"/>
</dbReference>
<dbReference type="SMART" id="SM00642">
    <property type="entry name" value="Aamy"/>
    <property type="match status" value="1"/>
</dbReference>
<dbReference type="SUPFAM" id="SSF51445">
    <property type="entry name" value="(Trans)glycosidases"/>
    <property type="match status" value="1"/>
</dbReference>
<dbReference type="SUPFAM" id="SSF81296">
    <property type="entry name" value="E set domains"/>
    <property type="match status" value="2"/>
</dbReference>
<dbReference type="SUPFAM" id="SSF51011">
    <property type="entry name" value="Glycosyl hydrolase domain"/>
    <property type="match status" value="1"/>
</dbReference>
<gene>
    <name evidence="1" type="primary">glgB</name>
    <name type="ordered locus">Psyr_2491</name>
</gene>
<keyword id="KW-0119">Carbohydrate metabolism</keyword>
<keyword id="KW-0320">Glycogen biosynthesis</keyword>
<keyword id="KW-0321">Glycogen metabolism</keyword>
<keyword id="KW-0328">Glycosyltransferase</keyword>
<keyword id="KW-0808">Transferase</keyword>
<reference key="1">
    <citation type="journal article" date="2005" name="Proc. Natl. Acad. Sci. U.S.A.">
        <title>Comparison of the complete genome sequences of Pseudomonas syringae pv. syringae B728a and pv. tomato DC3000.</title>
        <authorList>
            <person name="Feil H."/>
            <person name="Feil W.S."/>
            <person name="Chain P."/>
            <person name="Larimer F."/>
            <person name="Dibartolo G."/>
            <person name="Copeland A."/>
            <person name="Lykidis A."/>
            <person name="Trong S."/>
            <person name="Nolan M."/>
            <person name="Goltsman E."/>
            <person name="Thiel J."/>
            <person name="Malfatti S."/>
            <person name="Loper J.E."/>
            <person name="Lapidus A."/>
            <person name="Detter J.C."/>
            <person name="Land M."/>
            <person name="Richardson P.M."/>
            <person name="Kyrpides N.C."/>
            <person name="Ivanova N."/>
            <person name="Lindow S.E."/>
        </authorList>
    </citation>
    <scope>NUCLEOTIDE SEQUENCE [LARGE SCALE GENOMIC DNA]</scope>
    <source>
        <strain>B728a</strain>
    </source>
</reference>
<proteinExistence type="inferred from homology"/>
<evidence type="ECO:0000255" key="1">
    <source>
        <dbReference type="HAMAP-Rule" id="MF_00685"/>
    </source>
</evidence>
<comment type="function">
    <text evidence="1">Catalyzes the formation of the alpha-1,6-glucosidic linkages in glycogen by scission of a 1,4-alpha-linked oligosaccharide from growing alpha-1,4-glucan chains and the subsequent attachment of the oligosaccharide to the alpha-1,6 position.</text>
</comment>
<comment type="catalytic activity">
    <reaction evidence="1">
        <text>Transfers a segment of a (1-&gt;4)-alpha-D-glucan chain to a primary hydroxy group in a similar glucan chain.</text>
        <dbReference type="EC" id="2.4.1.18"/>
    </reaction>
</comment>
<comment type="pathway">
    <text evidence="1">Glycan biosynthesis; glycogen biosynthesis.</text>
</comment>
<comment type="subunit">
    <text evidence="1">Monomer.</text>
</comment>
<comment type="similarity">
    <text evidence="1">Belongs to the glycosyl hydrolase 13 family. GlgB subfamily.</text>
</comment>
<organism>
    <name type="scientific">Pseudomonas syringae pv. syringae (strain B728a)</name>
    <dbReference type="NCBI Taxonomy" id="205918"/>
    <lineage>
        <taxon>Bacteria</taxon>
        <taxon>Pseudomonadati</taxon>
        <taxon>Pseudomonadota</taxon>
        <taxon>Gammaproteobacteria</taxon>
        <taxon>Pseudomonadales</taxon>
        <taxon>Pseudomonadaceae</taxon>
        <taxon>Pseudomonas</taxon>
        <taxon>Pseudomonas syringae</taxon>
    </lineage>
</organism>